<keyword id="KW-0903">Direct protein sequencing</keyword>
<keyword id="KW-0408">Iron</keyword>
<keyword id="KW-0409">Iron storage</keyword>
<keyword id="KW-0479">Metal-binding</keyword>
<keyword id="KW-0560">Oxidoreductase</keyword>
<evidence type="ECO:0000250" key="1"/>
<evidence type="ECO:0000250" key="2">
    <source>
        <dbReference type="UniProtKB" id="P02794"/>
    </source>
</evidence>
<evidence type="ECO:0000255" key="3"/>
<evidence type="ECO:0000255" key="4">
    <source>
        <dbReference type="PROSITE-ProRule" id="PRU00085"/>
    </source>
</evidence>
<evidence type="ECO:0000269" key="5">
    <source>
    </source>
</evidence>
<evidence type="ECO:0000303" key="6">
    <source>
    </source>
</evidence>
<evidence type="ECO:0000305" key="7"/>
<sequence>MESQVRQNFHKDCEAAINRQINLELYASYSYLSMAYYFDRDDVALPGFAHFFKQQSEEEREHAEKLLKFQNQRGGRIFLQDVKKPDRDEWGSGLDALECALQLEKNVNQSLLDLHKVCSEHNDPHMCDFLETHYLDEQVKSIKELGDWVTNLRRLGAPQNGMAEYLFDKHTLGK</sequence>
<protein>
    <recommendedName>
        <fullName evidence="6">Ferritin, heavy subunit</fullName>
        <shortName evidence="6">Ferritin H</shortName>
        <ecNumber>1.16.3.1</ecNumber>
    </recommendedName>
</protein>
<proteinExistence type="evidence at protein level"/>
<accession>P85838</accession>
<organism>
    <name type="scientific">Trematomus bernacchii</name>
    <name type="common">Emerald rockcod</name>
    <name type="synonym">Pseudotrematomus bernacchii</name>
    <dbReference type="NCBI Taxonomy" id="40690"/>
    <lineage>
        <taxon>Eukaryota</taxon>
        <taxon>Metazoa</taxon>
        <taxon>Chordata</taxon>
        <taxon>Craniata</taxon>
        <taxon>Vertebrata</taxon>
        <taxon>Euteleostomi</taxon>
        <taxon>Actinopterygii</taxon>
        <taxon>Neopterygii</taxon>
        <taxon>Teleostei</taxon>
        <taxon>Neoteleostei</taxon>
        <taxon>Acanthomorphata</taxon>
        <taxon>Eupercaria</taxon>
        <taxon>Perciformes</taxon>
        <taxon>Notothenioidei</taxon>
        <taxon>Nototheniidae</taxon>
        <taxon>Trematomus</taxon>
    </lineage>
</organism>
<feature type="chain" id="PRO_0000352780" description="Ferritin, heavy subunit">
    <location>
        <begin position="1"/>
        <end position="174"/>
    </location>
</feature>
<feature type="domain" description="Ferritin-like diiron" evidence="4">
    <location>
        <begin position="7"/>
        <end position="156"/>
    </location>
</feature>
<feature type="binding site" evidence="2 4">
    <location>
        <position position="24"/>
    </location>
    <ligand>
        <name>Fe cation</name>
        <dbReference type="ChEBI" id="CHEBI:24875"/>
        <label>1</label>
    </ligand>
</feature>
<feature type="binding site" evidence="2 4">
    <location>
        <position position="59"/>
    </location>
    <ligand>
        <name>Fe cation</name>
        <dbReference type="ChEBI" id="CHEBI:24875"/>
        <label>1</label>
    </ligand>
</feature>
<feature type="binding site" evidence="2 4">
    <location>
        <position position="59"/>
    </location>
    <ligand>
        <name>Fe cation</name>
        <dbReference type="ChEBI" id="CHEBI:24875"/>
        <label>2</label>
    </ligand>
</feature>
<feature type="binding site" evidence="2 4">
    <location>
        <position position="62"/>
    </location>
    <ligand>
        <name>Fe cation</name>
        <dbReference type="ChEBI" id="CHEBI:24875"/>
        <label>1</label>
    </ligand>
</feature>
<feature type="binding site" evidence="2 4">
    <location>
        <position position="104"/>
    </location>
    <ligand>
        <name>Fe cation</name>
        <dbReference type="ChEBI" id="CHEBI:24875"/>
        <label>2</label>
    </ligand>
</feature>
<feature type="binding site" evidence="2 4">
    <location>
        <position position="138"/>
    </location>
    <ligand>
        <name>Fe cation</name>
        <dbReference type="ChEBI" id="CHEBI:24875"/>
        <label>2</label>
    </ligand>
</feature>
<name>FRIH_TREBE</name>
<reference evidence="7" key="1">
    <citation type="journal article" date="2008" name="Arch. Biochem. Biophys.">
        <title>The unusual co-assembly of H- and M-chains in the ferritin molecule from the Antarctic teleosts Trematomus bernacchii and Trematomus newnesi.</title>
        <authorList>
            <person name="Giorgi A."/>
            <person name="Mignogna G."/>
            <person name="Bellapadrona G."/>
            <person name="Gattoni M."/>
            <person name="Chiaraluce R."/>
            <person name="Consalvi V."/>
            <person name="Chiancone E."/>
            <person name="Stefanini S."/>
        </authorList>
    </citation>
    <scope>PROTEIN SEQUENCE</scope>
    <scope>CATALYTIC ACTIVITY</scope>
    <scope>SUBUNIT</scope>
    <scope>TISSUE SPECIFICITY</scope>
    <source>
        <tissue evidence="5">Liver</tissue>
    </source>
</reference>
<dbReference type="EC" id="1.16.3.1"/>
<dbReference type="SMR" id="P85838"/>
<dbReference type="OrthoDB" id="186462at2759"/>
<dbReference type="GO" id="GO:0005737">
    <property type="term" value="C:cytoplasm"/>
    <property type="evidence" value="ECO:0007669"/>
    <property type="project" value="TreeGrafter"/>
</dbReference>
<dbReference type="GO" id="GO:0008199">
    <property type="term" value="F:ferric iron binding"/>
    <property type="evidence" value="ECO:0007669"/>
    <property type="project" value="InterPro"/>
</dbReference>
<dbReference type="GO" id="GO:0008198">
    <property type="term" value="F:ferrous iron binding"/>
    <property type="evidence" value="ECO:0007669"/>
    <property type="project" value="TreeGrafter"/>
</dbReference>
<dbReference type="GO" id="GO:0004322">
    <property type="term" value="F:ferroxidase activity"/>
    <property type="evidence" value="ECO:0007669"/>
    <property type="project" value="UniProtKB-EC"/>
</dbReference>
<dbReference type="GO" id="GO:0006879">
    <property type="term" value="P:intracellular iron ion homeostasis"/>
    <property type="evidence" value="ECO:0007669"/>
    <property type="project" value="UniProtKB-KW"/>
</dbReference>
<dbReference type="GO" id="GO:0006826">
    <property type="term" value="P:iron ion transport"/>
    <property type="evidence" value="ECO:0007669"/>
    <property type="project" value="InterPro"/>
</dbReference>
<dbReference type="GO" id="GO:0110076">
    <property type="term" value="P:negative regulation of ferroptosis"/>
    <property type="evidence" value="ECO:0000250"/>
    <property type="project" value="UniProtKB"/>
</dbReference>
<dbReference type="CDD" id="cd01056">
    <property type="entry name" value="Euk_Ferritin"/>
    <property type="match status" value="1"/>
</dbReference>
<dbReference type="FunFam" id="1.20.1260.10:FF:000002">
    <property type="entry name" value="Ferritin, mitochondrial"/>
    <property type="match status" value="1"/>
</dbReference>
<dbReference type="Gene3D" id="1.20.1260.10">
    <property type="match status" value="1"/>
</dbReference>
<dbReference type="InterPro" id="IPR001519">
    <property type="entry name" value="Ferritin"/>
</dbReference>
<dbReference type="InterPro" id="IPR012347">
    <property type="entry name" value="Ferritin-like"/>
</dbReference>
<dbReference type="InterPro" id="IPR009040">
    <property type="entry name" value="Ferritin-like_diiron"/>
</dbReference>
<dbReference type="InterPro" id="IPR009078">
    <property type="entry name" value="Ferritin-like_SF"/>
</dbReference>
<dbReference type="InterPro" id="IPR014034">
    <property type="entry name" value="Ferritin_CS"/>
</dbReference>
<dbReference type="InterPro" id="IPR008331">
    <property type="entry name" value="Ferritin_DPS_dom"/>
</dbReference>
<dbReference type="PANTHER" id="PTHR11431">
    <property type="entry name" value="FERRITIN"/>
    <property type="match status" value="1"/>
</dbReference>
<dbReference type="PANTHER" id="PTHR11431:SF37">
    <property type="entry name" value="FERRITIN HEAVY CHAIN"/>
    <property type="match status" value="1"/>
</dbReference>
<dbReference type="Pfam" id="PF00210">
    <property type="entry name" value="Ferritin"/>
    <property type="match status" value="1"/>
</dbReference>
<dbReference type="SUPFAM" id="SSF47240">
    <property type="entry name" value="Ferritin-like"/>
    <property type="match status" value="1"/>
</dbReference>
<dbReference type="PROSITE" id="PS00540">
    <property type="entry name" value="FERRITIN_1"/>
    <property type="match status" value="1"/>
</dbReference>
<dbReference type="PROSITE" id="PS00204">
    <property type="entry name" value="FERRITIN_2"/>
    <property type="match status" value="1"/>
</dbReference>
<dbReference type="PROSITE" id="PS50905">
    <property type="entry name" value="FERRITIN_LIKE"/>
    <property type="match status" value="1"/>
</dbReference>
<comment type="function">
    <text evidence="1 2">Stores iron in a soluble, non-toxic, readily available form. Important for iron homeostasis. Has ferroxidase activity. Iron is taken up in the ferrous form and deposited as ferric hydroxides after oxidation. Also plays a role in delivery of iron to cells. Mediates iron uptake in capsule cells of the developing kidney (By similarity). Delivery to lysosomes is mediated by the cargo receptor NCOA4 for autophagic degradation and release of iron (By similarity).</text>
</comment>
<comment type="catalytic activity">
    <reaction evidence="5">
        <text>4 Fe(2+) + O2 + 4 H(+) = 4 Fe(3+) + 2 H2O</text>
        <dbReference type="Rhea" id="RHEA:11148"/>
        <dbReference type="ChEBI" id="CHEBI:15377"/>
        <dbReference type="ChEBI" id="CHEBI:15378"/>
        <dbReference type="ChEBI" id="CHEBI:15379"/>
        <dbReference type="ChEBI" id="CHEBI:29033"/>
        <dbReference type="ChEBI" id="CHEBI:29034"/>
        <dbReference type="EC" id="1.16.3.1"/>
    </reaction>
</comment>
<comment type="subunit">
    <text evidence="5 7">In liver, forms a heteromer consisting of middle and heavy subunits. The functional molecule forms a roughly spherical shell with a diameter of 12 nm and contains a central cavity into which the insoluble mineral iron core is deposited.</text>
</comment>
<comment type="tissue specificity">
    <text evidence="5">Liver (at protein level).</text>
</comment>
<comment type="similarity">
    <text evidence="3">Belongs to the ferritin family.</text>
</comment>